<feature type="chain" id="PRO_0000117854" description="NAD(P)H-quinone oxidoreductase subunit 3, chloroplastic">
    <location>
        <begin position="1"/>
        <end position="120"/>
    </location>
</feature>
<feature type="transmembrane region" description="Helical" evidence="1">
    <location>
        <begin position="9"/>
        <end position="29"/>
    </location>
</feature>
<feature type="transmembrane region" description="Helical" evidence="1">
    <location>
        <begin position="64"/>
        <end position="84"/>
    </location>
</feature>
<feature type="transmembrane region" description="Helical" evidence="1">
    <location>
        <begin position="88"/>
        <end position="108"/>
    </location>
</feature>
<sequence length="120" mass="13857">MFLLYEYDIFWAFLIISSVIPILAFLFSGILAPISKGPEKLSSYESGIEPMGDAWLQFRIRYYMFALVFVVFDVETVFLYPWAMSFDILGVSVFIEALIFVLILIVGLVYAWRKGALEWS</sequence>
<accession>Q9M3L9</accession>
<dbReference type="EC" id="7.1.1.-" evidence="1"/>
<dbReference type="EMBL" id="AJ400848">
    <property type="protein sequence ID" value="CAB88734.1"/>
    <property type="molecule type" value="Genomic_DNA"/>
</dbReference>
<dbReference type="RefSeq" id="NP_054941.1">
    <property type="nucleotide sequence ID" value="NC_002202.1"/>
</dbReference>
<dbReference type="PDB" id="9GRX">
    <property type="method" value="EM"/>
    <property type="resolution" value="3.19 A"/>
    <property type="chains" value="C=5-119"/>
</dbReference>
<dbReference type="PDBsum" id="9GRX"/>
<dbReference type="EMDB" id="EMD-51527"/>
<dbReference type="SMR" id="Q9M3L9"/>
<dbReference type="FunCoup" id="Q9M3L9">
    <property type="interactions" value="37"/>
</dbReference>
<dbReference type="STRING" id="3562.Q9M3L9"/>
<dbReference type="GeneID" id="2715587"/>
<dbReference type="KEGG" id="soe:2715587"/>
<dbReference type="InParanoid" id="Q9M3L9"/>
<dbReference type="OrthoDB" id="154075at2759"/>
<dbReference type="Proteomes" id="UP001155700">
    <property type="component" value="Chloroplast Pltd"/>
</dbReference>
<dbReference type="GO" id="GO:0009535">
    <property type="term" value="C:chloroplast thylakoid membrane"/>
    <property type="evidence" value="ECO:0007669"/>
    <property type="project" value="UniProtKB-SubCell"/>
</dbReference>
<dbReference type="GO" id="GO:0030964">
    <property type="term" value="C:NADH dehydrogenase complex"/>
    <property type="evidence" value="ECO:0000318"/>
    <property type="project" value="GO_Central"/>
</dbReference>
<dbReference type="GO" id="GO:0008137">
    <property type="term" value="F:NADH dehydrogenase (ubiquinone) activity"/>
    <property type="evidence" value="ECO:0000318"/>
    <property type="project" value="GO_Central"/>
</dbReference>
<dbReference type="GO" id="GO:0048038">
    <property type="term" value="F:quinone binding"/>
    <property type="evidence" value="ECO:0007669"/>
    <property type="project" value="UniProtKB-KW"/>
</dbReference>
<dbReference type="GO" id="GO:0019684">
    <property type="term" value="P:photosynthesis, light reaction"/>
    <property type="evidence" value="ECO:0007669"/>
    <property type="project" value="UniProtKB-UniRule"/>
</dbReference>
<dbReference type="FunFam" id="1.20.58.1610:FF:000001">
    <property type="entry name" value="NAD(P)H-quinone oxidoreductase subunit 3, chloroplastic"/>
    <property type="match status" value="1"/>
</dbReference>
<dbReference type="Gene3D" id="1.20.58.1610">
    <property type="entry name" value="NADH:ubiquinone/plastoquinone oxidoreductase, chain 3"/>
    <property type="match status" value="1"/>
</dbReference>
<dbReference type="HAMAP" id="MF_01394">
    <property type="entry name" value="NDH1_NuoA"/>
    <property type="match status" value="1"/>
</dbReference>
<dbReference type="InterPro" id="IPR023043">
    <property type="entry name" value="NAD(P)H_OxRDtase_bac/plastid"/>
</dbReference>
<dbReference type="InterPro" id="IPR000440">
    <property type="entry name" value="NADH_UbQ/plastoQ_OxRdtase_su3"/>
</dbReference>
<dbReference type="InterPro" id="IPR038430">
    <property type="entry name" value="NDAH_ubi_oxred_su3_sf"/>
</dbReference>
<dbReference type="PANTHER" id="PTHR11058">
    <property type="entry name" value="NADH-UBIQUINONE OXIDOREDUCTASE CHAIN 3"/>
    <property type="match status" value="1"/>
</dbReference>
<dbReference type="PANTHER" id="PTHR11058:SF9">
    <property type="entry name" value="NADH-UBIQUINONE OXIDOREDUCTASE CHAIN 3"/>
    <property type="match status" value="1"/>
</dbReference>
<dbReference type="Pfam" id="PF00507">
    <property type="entry name" value="Oxidored_q4"/>
    <property type="match status" value="1"/>
</dbReference>
<keyword id="KW-0002">3D-structure</keyword>
<keyword id="KW-0150">Chloroplast</keyword>
<keyword id="KW-0472">Membrane</keyword>
<keyword id="KW-0520">NAD</keyword>
<keyword id="KW-0521">NADP</keyword>
<keyword id="KW-0934">Plastid</keyword>
<keyword id="KW-0618">Plastoquinone</keyword>
<keyword id="KW-0874">Quinone</keyword>
<keyword id="KW-1185">Reference proteome</keyword>
<keyword id="KW-0793">Thylakoid</keyword>
<keyword id="KW-1278">Translocase</keyword>
<keyword id="KW-0812">Transmembrane</keyword>
<keyword id="KW-1133">Transmembrane helix</keyword>
<keyword id="KW-0813">Transport</keyword>
<evidence type="ECO:0000255" key="1">
    <source>
        <dbReference type="HAMAP-Rule" id="MF_01394"/>
    </source>
</evidence>
<proteinExistence type="evidence at protein level"/>
<gene>
    <name evidence="1" type="primary">ndhC</name>
</gene>
<organism>
    <name type="scientific">Spinacia oleracea</name>
    <name type="common">Spinach</name>
    <dbReference type="NCBI Taxonomy" id="3562"/>
    <lineage>
        <taxon>Eukaryota</taxon>
        <taxon>Viridiplantae</taxon>
        <taxon>Streptophyta</taxon>
        <taxon>Embryophyta</taxon>
        <taxon>Tracheophyta</taxon>
        <taxon>Spermatophyta</taxon>
        <taxon>Magnoliopsida</taxon>
        <taxon>eudicotyledons</taxon>
        <taxon>Gunneridae</taxon>
        <taxon>Pentapetalae</taxon>
        <taxon>Caryophyllales</taxon>
        <taxon>Chenopodiaceae</taxon>
        <taxon>Chenopodioideae</taxon>
        <taxon>Anserineae</taxon>
        <taxon>Spinacia</taxon>
    </lineage>
</organism>
<protein>
    <recommendedName>
        <fullName evidence="1">NAD(P)H-quinone oxidoreductase subunit 3, chloroplastic</fullName>
        <ecNumber evidence="1">7.1.1.-</ecNumber>
    </recommendedName>
    <alternativeName>
        <fullName evidence="1">NAD(P)H dehydrogenase subunit 3</fullName>
    </alternativeName>
    <alternativeName>
        <fullName evidence="1">NADH-plastoquinone oxidoreductase subunit 3</fullName>
    </alternativeName>
</protein>
<comment type="function">
    <text evidence="1">NDH shuttles electrons from NAD(P)H:plastoquinone, via FMN and iron-sulfur (Fe-S) centers, to quinones in the photosynthetic chain and possibly in a chloroplast respiratory chain. The immediate electron acceptor for the enzyme in this species is believed to be plastoquinone. Couples the redox reaction to proton translocation, and thus conserves the redox energy in a proton gradient.</text>
</comment>
<comment type="catalytic activity">
    <reaction evidence="1">
        <text>a plastoquinone + NADH + (n+1) H(+)(in) = a plastoquinol + NAD(+) + n H(+)(out)</text>
        <dbReference type="Rhea" id="RHEA:42608"/>
        <dbReference type="Rhea" id="RHEA-COMP:9561"/>
        <dbReference type="Rhea" id="RHEA-COMP:9562"/>
        <dbReference type="ChEBI" id="CHEBI:15378"/>
        <dbReference type="ChEBI" id="CHEBI:17757"/>
        <dbReference type="ChEBI" id="CHEBI:57540"/>
        <dbReference type="ChEBI" id="CHEBI:57945"/>
        <dbReference type="ChEBI" id="CHEBI:62192"/>
    </reaction>
</comment>
<comment type="catalytic activity">
    <reaction evidence="1">
        <text>a plastoquinone + NADPH + (n+1) H(+)(in) = a plastoquinol + NADP(+) + n H(+)(out)</text>
        <dbReference type="Rhea" id="RHEA:42612"/>
        <dbReference type="Rhea" id="RHEA-COMP:9561"/>
        <dbReference type="Rhea" id="RHEA-COMP:9562"/>
        <dbReference type="ChEBI" id="CHEBI:15378"/>
        <dbReference type="ChEBI" id="CHEBI:17757"/>
        <dbReference type="ChEBI" id="CHEBI:57783"/>
        <dbReference type="ChEBI" id="CHEBI:58349"/>
        <dbReference type="ChEBI" id="CHEBI:62192"/>
    </reaction>
</comment>
<comment type="subunit">
    <text evidence="1">NDH is composed of at least 16 different subunits, 5 of which are encoded in the nucleus.</text>
</comment>
<comment type="subcellular location">
    <subcellularLocation>
        <location evidence="1">Plastid</location>
        <location evidence="1">Chloroplast thylakoid membrane</location>
        <topology evidence="1">Multi-pass membrane protein</topology>
    </subcellularLocation>
</comment>
<comment type="similarity">
    <text evidence="1">Belongs to the complex I subunit 3 family.</text>
</comment>
<geneLocation type="chloroplast"/>
<reference key="1">
    <citation type="journal article" date="2001" name="Plant Mol. Biol.">
        <title>The plastid chromosome of spinach (Spinacia oleracea): complete nucleotide sequence and gene organization.</title>
        <authorList>
            <person name="Schmitz-Linneweber C."/>
            <person name="Maier R.M."/>
            <person name="Alcaraz J.-P."/>
            <person name="Cottet A."/>
            <person name="Herrmann R.G."/>
            <person name="Mache R."/>
        </authorList>
    </citation>
    <scope>NUCLEOTIDE SEQUENCE [LARGE SCALE GENOMIC DNA]</scope>
    <source>
        <strain>cv. Geant d'hiver</strain>
        <strain>cv. Monatol</strain>
    </source>
</reference>
<name>NU3C_SPIOL</name>